<reference key="1">
    <citation type="journal article" date="2007" name="PLoS ONE">
        <title>Patterns of genome evolution among the microsporidian parasites Encephalitozoon cuniculi, Antonospora locustae and Enterocytozoon bieneusi.</title>
        <authorList>
            <person name="Corradi N."/>
            <person name="Akiyoshi D.E."/>
            <person name="Morrison H.G."/>
            <person name="Feng X."/>
            <person name="Weiss L.M."/>
            <person name="Tzipori S."/>
            <person name="Keeling P.J."/>
        </authorList>
    </citation>
    <scope>NUCLEOTIDE SEQUENCE [LARGE SCALE GENOMIC DNA]</scope>
    <source>
        <strain>H348</strain>
    </source>
</reference>
<reference key="2">
    <citation type="journal article" date="2009" name="PLoS Pathog.">
        <title>Genomic survey of the non-cultivatable opportunistic human pathogen, Enterocytozoon bieneusi.</title>
        <authorList>
            <person name="Akiyoshi D.E."/>
            <person name="Morrison H.G."/>
            <person name="Lei S."/>
            <person name="Feng X."/>
            <person name="Zhang Q."/>
            <person name="Corradi N."/>
            <person name="Mayanja H."/>
            <person name="Tumwine J.K."/>
            <person name="Keeling P.J."/>
            <person name="Weiss L.M."/>
            <person name="Tzipori S."/>
        </authorList>
    </citation>
    <scope>NUCLEOTIDE SEQUENCE [LARGE SCALE GENOMIC DNA]</scope>
    <source>
        <strain>H348</strain>
    </source>
</reference>
<gene>
    <name type="ORF">EBI_21705</name>
</gene>
<organism>
    <name type="scientific">Enterocytozoon bieneusi (strain H348)</name>
    <name type="common">Microsporidian parasite</name>
    <dbReference type="NCBI Taxonomy" id="481877"/>
    <lineage>
        <taxon>Eukaryota</taxon>
        <taxon>Fungi</taxon>
        <taxon>Fungi incertae sedis</taxon>
        <taxon>Microsporidia</taxon>
        <taxon>Enterocytozoonidae</taxon>
        <taxon>Enterocytozoon</taxon>
    </lineage>
</organism>
<accession>B7XHQ4</accession>
<proteinExistence type="inferred from homology"/>
<name>SYDC_ENTBH</name>
<feature type="chain" id="PRO_0000388406" description="Probable aspartate--tRNA ligase, cytoplasmic">
    <location>
        <begin position="1"/>
        <end position="474"/>
    </location>
</feature>
<feature type="region of interest" description="Aspartate" evidence="1">
    <location>
        <begin position="225"/>
        <end position="228"/>
    </location>
</feature>
<feature type="binding site" evidence="1">
    <location>
        <position position="203"/>
    </location>
    <ligand>
        <name>L-aspartate</name>
        <dbReference type="ChEBI" id="CHEBI:29991"/>
    </ligand>
</feature>
<feature type="binding site" evidence="1">
    <location>
        <begin position="247"/>
        <end position="249"/>
    </location>
    <ligand>
        <name>ATP</name>
        <dbReference type="ChEBI" id="CHEBI:30616"/>
    </ligand>
</feature>
<feature type="binding site" evidence="1">
    <location>
        <position position="247"/>
    </location>
    <ligand>
        <name>L-aspartate</name>
        <dbReference type="ChEBI" id="CHEBI:29991"/>
    </ligand>
</feature>
<feature type="binding site" evidence="1">
    <location>
        <begin position="255"/>
        <end position="257"/>
    </location>
    <ligand>
        <name>ATP</name>
        <dbReference type="ChEBI" id="CHEBI:30616"/>
    </ligand>
</feature>
<feature type="binding site" evidence="1">
    <location>
        <position position="397"/>
    </location>
    <ligand>
        <name>ATP</name>
        <dbReference type="ChEBI" id="CHEBI:30616"/>
    </ligand>
</feature>
<feature type="binding site" evidence="1">
    <location>
        <position position="400"/>
    </location>
    <ligand>
        <name>L-aspartate</name>
        <dbReference type="ChEBI" id="CHEBI:29991"/>
    </ligand>
</feature>
<feature type="binding site" evidence="1">
    <location>
        <position position="404"/>
    </location>
    <ligand>
        <name>L-aspartate</name>
        <dbReference type="ChEBI" id="CHEBI:29991"/>
    </ligand>
</feature>
<feature type="binding site" evidence="1">
    <location>
        <begin position="445"/>
        <end position="448"/>
    </location>
    <ligand>
        <name>ATP</name>
        <dbReference type="ChEBI" id="CHEBI:30616"/>
    </ligand>
</feature>
<evidence type="ECO:0000250" key="1"/>
<evidence type="ECO:0000305" key="2"/>
<keyword id="KW-0030">Aminoacyl-tRNA synthetase</keyword>
<keyword id="KW-0067">ATP-binding</keyword>
<keyword id="KW-0963">Cytoplasm</keyword>
<keyword id="KW-0436">Ligase</keyword>
<keyword id="KW-0547">Nucleotide-binding</keyword>
<keyword id="KW-0648">Protein biosynthesis</keyword>
<dbReference type="EC" id="6.1.1.12"/>
<dbReference type="EMBL" id="ABGB01000015">
    <property type="protein sequence ID" value="EED44551.1"/>
    <property type="molecule type" value="Genomic_DNA"/>
</dbReference>
<dbReference type="RefSeq" id="XP_002649532.1">
    <property type="nucleotide sequence ID" value="XM_002649486.1"/>
</dbReference>
<dbReference type="SMR" id="B7XHQ4"/>
<dbReference type="FunCoup" id="B7XHQ4">
    <property type="interactions" value="328"/>
</dbReference>
<dbReference type="STRING" id="481877.B7XHQ4"/>
<dbReference type="VEuPathDB" id="MicrosporidiaDB:EBI_21705"/>
<dbReference type="HOGENOM" id="CLU_004553_2_1_1"/>
<dbReference type="InParanoid" id="B7XHQ4"/>
<dbReference type="OMA" id="WVHEIRD"/>
<dbReference type="OrthoDB" id="372395at2759"/>
<dbReference type="GO" id="GO:0017101">
    <property type="term" value="C:aminoacyl-tRNA synthetase multienzyme complex"/>
    <property type="evidence" value="ECO:0007669"/>
    <property type="project" value="TreeGrafter"/>
</dbReference>
<dbReference type="GO" id="GO:0005829">
    <property type="term" value="C:cytosol"/>
    <property type="evidence" value="ECO:0007669"/>
    <property type="project" value="TreeGrafter"/>
</dbReference>
<dbReference type="GO" id="GO:0004815">
    <property type="term" value="F:aspartate-tRNA ligase activity"/>
    <property type="evidence" value="ECO:0007669"/>
    <property type="project" value="UniProtKB-EC"/>
</dbReference>
<dbReference type="GO" id="GO:0005524">
    <property type="term" value="F:ATP binding"/>
    <property type="evidence" value="ECO:0007669"/>
    <property type="project" value="UniProtKB-KW"/>
</dbReference>
<dbReference type="GO" id="GO:0003723">
    <property type="term" value="F:RNA binding"/>
    <property type="evidence" value="ECO:0007669"/>
    <property type="project" value="TreeGrafter"/>
</dbReference>
<dbReference type="GO" id="GO:0006422">
    <property type="term" value="P:aspartyl-tRNA aminoacylation"/>
    <property type="evidence" value="ECO:0007669"/>
    <property type="project" value="InterPro"/>
</dbReference>
<dbReference type="FunFam" id="3.30.930.10:FF:000038">
    <property type="entry name" value="Aspartate--tRNA ligase"/>
    <property type="match status" value="1"/>
</dbReference>
<dbReference type="Gene3D" id="3.30.930.10">
    <property type="entry name" value="Bira Bifunctional Protein, Domain 2"/>
    <property type="match status" value="1"/>
</dbReference>
<dbReference type="Gene3D" id="2.40.50.140">
    <property type="entry name" value="Nucleic acid-binding proteins"/>
    <property type="match status" value="1"/>
</dbReference>
<dbReference type="HAMAP" id="MF_02075">
    <property type="entry name" value="Asp_tRNA_synth_type2"/>
    <property type="match status" value="1"/>
</dbReference>
<dbReference type="InterPro" id="IPR004364">
    <property type="entry name" value="Aa-tRNA-synt_II"/>
</dbReference>
<dbReference type="InterPro" id="IPR006195">
    <property type="entry name" value="aa-tRNA-synth_II"/>
</dbReference>
<dbReference type="InterPro" id="IPR045864">
    <property type="entry name" value="aa-tRNA-synth_II/BPL/LPL"/>
</dbReference>
<dbReference type="InterPro" id="IPR004523">
    <property type="entry name" value="Asp-tRNA_synthase_2"/>
</dbReference>
<dbReference type="InterPro" id="IPR002312">
    <property type="entry name" value="Asp/Asn-tRNA-synth_IIb"/>
</dbReference>
<dbReference type="InterPro" id="IPR012340">
    <property type="entry name" value="NA-bd_OB-fold"/>
</dbReference>
<dbReference type="NCBIfam" id="TIGR00458">
    <property type="entry name" value="aspS_nondisc"/>
    <property type="match status" value="1"/>
</dbReference>
<dbReference type="NCBIfam" id="NF003483">
    <property type="entry name" value="PRK05159.1"/>
    <property type="match status" value="1"/>
</dbReference>
<dbReference type="PANTHER" id="PTHR43450:SF1">
    <property type="entry name" value="ASPARTATE--TRNA LIGASE, CYTOPLASMIC"/>
    <property type="match status" value="1"/>
</dbReference>
<dbReference type="PANTHER" id="PTHR43450">
    <property type="entry name" value="ASPARTYL-TRNA SYNTHETASE"/>
    <property type="match status" value="1"/>
</dbReference>
<dbReference type="Pfam" id="PF00152">
    <property type="entry name" value="tRNA-synt_2"/>
    <property type="match status" value="1"/>
</dbReference>
<dbReference type="PRINTS" id="PR01042">
    <property type="entry name" value="TRNASYNTHASP"/>
</dbReference>
<dbReference type="SUPFAM" id="SSF55681">
    <property type="entry name" value="Class II aaRS and biotin synthetases"/>
    <property type="match status" value="1"/>
</dbReference>
<dbReference type="SUPFAM" id="SSF50249">
    <property type="entry name" value="Nucleic acid-binding proteins"/>
    <property type="match status" value="1"/>
</dbReference>
<dbReference type="PROSITE" id="PS50862">
    <property type="entry name" value="AA_TRNA_LIGASE_II"/>
    <property type="match status" value="1"/>
</dbReference>
<sequence>MTENSELNNKISTIKLKKLIEIQNLTDNMNGTVIRIRGFIESITSCSSQIFILLRDRLEKVQCIIFKSTNVSSIYEFSRLKKLPLESFIEIEGQVVFAEIPIKRATKQNIEIVISTLNILGPVVSKLPFQLKDCKIAGKESDTNTITVGYNLRLDNRFLDFRLPVTQSIIKIIDQTMYTFRTYLRTHEFIEIKTSKIIQSGSEGGANLFSLNYFNKPAYLAQSPQLYKQLAIIGGLKRVYEIGHVYRAEVSNINRYLSEFVGLDIEMEMETTYIDFIHFLHSLFINIFESFKNEMKKELEIIRQYYEFVDLKYRSTPIIITYKDAVDMLKSKNIQIDYGCDFSREHERILGKIIKDKEDIDIFTIIDYPSSIRAFYSYIDETTKLTRSYDFIVRGEEILSGAQRENRYDYLKNAVIDKGLNPENLKNYLEAFKYGAPPHIGCGIGLERFLKAYFGFDDIRYFSLFPRDPNRIFP</sequence>
<protein>
    <recommendedName>
        <fullName>Probable aspartate--tRNA ligase, cytoplasmic</fullName>
        <ecNumber>6.1.1.12</ecNumber>
    </recommendedName>
    <alternativeName>
        <fullName>Aspartyl-tRNA synthetase</fullName>
        <shortName>AspRS</shortName>
    </alternativeName>
</protein>
<comment type="catalytic activity">
    <reaction>
        <text>tRNA(Asp) + L-aspartate + ATP = L-aspartyl-tRNA(Asp) + AMP + diphosphate</text>
        <dbReference type="Rhea" id="RHEA:19649"/>
        <dbReference type="Rhea" id="RHEA-COMP:9660"/>
        <dbReference type="Rhea" id="RHEA-COMP:9678"/>
        <dbReference type="ChEBI" id="CHEBI:29991"/>
        <dbReference type="ChEBI" id="CHEBI:30616"/>
        <dbReference type="ChEBI" id="CHEBI:33019"/>
        <dbReference type="ChEBI" id="CHEBI:78442"/>
        <dbReference type="ChEBI" id="CHEBI:78516"/>
        <dbReference type="ChEBI" id="CHEBI:456215"/>
        <dbReference type="EC" id="6.1.1.12"/>
    </reaction>
</comment>
<comment type="subunit">
    <text evidence="1">Homodimer.</text>
</comment>
<comment type="subcellular location">
    <subcellularLocation>
        <location evidence="1">Cytoplasm</location>
    </subcellularLocation>
</comment>
<comment type="similarity">
    <text evidence="2">Belongs to the class-II aminoacyl-tRNA synthetase family. Type 2 subfamily.</text>
</comment>